<gene>
    <name evidence="1" type="primary">argC</name>
    <name type="ordered locus">LMHCC_0971</name>
</gene>
<sequence>MKVSIIGATGYGGLELIRLLHQHASVDIATLHSFSAQSETLATFYPHLKDLEASPLEKINPTEIIEKSDTVFIATPSGIAKDIALPYVDAGLNVIDLSGDFRLKDRQLYEKWYGKSAAPTEYIAKAEYGLAEFREKKETTFIANPGCYATATLLGLAPLTKNKLIDPTSIIVDAKSGISGAGKVPSASTHFTETNENMTLYKMNSHQHIPEIMQQLTKWDESIPAIQFSTSLIPITRGIFTTIYVKPKNPITQKELHTLYESTYENAPFVRIQPENVYPTVKQVTASNYCDIGLAYNEKTNVITIVSVIDNLVKGAAGQAIQNLNIMANFAESDGLRFIPVYP</sequence>
<name>ARGC_LISMH</name>
<dbReference type="EC" id="1.2.1.38" evidence="1"/>
<dbReference type="EMBL" id="CP001175">
    <property type="protein sequence ID" value="ACK39319.1"/>
    <property type="molecule type" value="Genomic_DNA"/>
</dbReference>
<dbReference type="RefSeq" id="WP_012581243.1">
    <property type="nucleotide sequence ID" value="NC_011660.1"/>
</dbReference>
<dbReference type="SMR" id="B8DHF0"/>
<dbReference type="KEGG" id="lmh:LMHCC_0971"/>
<dbReference type="HOGENOM" id="CLU_006384_0_1_9"/>
<dbReference type="UniPathway" id="UPA00068">
    <property type="reaction ID" value="UER00108"/>
</dbReference>
<dbReference type="GO" id="GO:0005737">
    <property type="term" value="C:cytoplasm"/>
    <property type="evidence" value="ECO:0007669"/>
    <property type="project" value="UniProtKB-SubCell"/>
</dbReference>
<dbReference type="GO" id="GO:0003942">
    <property type="term" value="F:N-acetyl-gamma-glutamyl-phosphate reductase activity"/>
    <property type="evidence" value="ECO:0007669"/>
    <property type="project" value="UniProtKB-UniRule"/>
</dbReference>
<dbReference type="GO" id="GO:0051287">
    <property type="term" value="F:NAD binding"/>
    <property type="evidence" value="ECO:0007669"/>
    <property type="project" value="InterPro"/>
</dbReference>
<dbReference type="GO" id="GO:0070401">
    <property type="term" value="F:NADP+ binding"/>
    <property type="evidence" value="ECO:0007669"/>
    <property type="project" value="InterPro"/>
</dbReference>
<dbReference type="GO" id="GO:0006526">
    <property type="term" value="P:L-arginine biosynthetic process"/>
    <property type="evidence" value="ECO:0007669"/>
    <property type="project" value="UniProtKB-UniRule"/>
</dbReference>
<dbReference type="CDD" id="cd23934">
    <property type="entry name" value="AGPR_1_C"/>
    <property type="match status" value="1"/>
</dbReference>
<dbReference type="CDD" id="cd17895">
    <property type="entry name" value="AGPR_1_N"/>
    <property type="match status" value="1"/>
</dbReference>
<dbReference type="FunFam" id="3.30.360.10:FF:000014">
    <property type="entry name" value="N-acetyl-gamma-glutamyl-phosphate reductase"/>
    <property type="match status" value="1"/>
</dbReference>
<dbReference type="Gene3D" id="3.30.360.10">
    <property type="entry name" value="Dihydrodipicolinate Reductase, domain 2"/>
    <property type="match status" value="1"/>
</dbReference>
<dbReference type="Gene3D" id="3.40.50.720">
    <property type="entry name" value="NAD(P)-binding Rossmann-like Domain"/>
    <property type="match status" value="1"/>
</dbReference>
<dbReference type="HAMAP" id="MF_00150">
    <property type="entry name" value="ArgC_type1"/>
    <property type="match status" value="1"/>
</dbReference>
<dbReference type="InterPro" id="IPR023013">
    <property type="entry name" value="AGPR_AS"/>
</dbReference>
<dbReference type="InterPro" id="IPR000706">
    <property type="entry name" value="AGPR_type-1"/>
</dbReference>
<dbReference type="InterPro" id="IPR036291">
    <property type="entry name" value="NAD(P)-bd_dom_sf"/>
</dbReference>
<dbReference type="InterPro" id="IPR050085">
    <property type="entry name" value="NAGSA_dehydrogenase"/>
</dbReference>
<dbReference type="InterPro" id="IPR000534">
    <property type="entry name" value="Semialdehyde_DH_NAD-bd"/>
</dbReference>
<dbReference type="NCBIfam" id="TIGR01850">
    <property type="entry name" value="argC"/>
    <property type="match status" value="1"/>
</dbReference>
<dbReference type="PANTHER" id="PTHR32338:SF10">
    <property type="entry name" value="N-ACETYL-GAMMA-GLUTAMYL-PHOSPHATE REDUCTASE, CHLOROPLASTIC-RELATED"/>
    <property type="match status" value="1"/>
</dbReference>
<dbReference type="PANTHER" id="PTHR32338">
    <property type="entry name" value="N-ACETYL-GAMMA-GLUTAMYL-PHOSPHATE REDUCTASE, CHLOROPLASTIC-RELATED-RELATED"/>
    <property type="match status" value="1"/>
</dbReference>
<dbReference type="Pfam" id="PF01118">
    <property type="entry name" value="Semialdhyde_dh"/>
    <property type="match status" value="1"/>
</dbReference>
<dbReference type="Pfam" id="PF22698">
    <property type="entry name" value="Semialdhyde_dhC_1"/>
    <property type="match status" value="1"/>
</dbReference>
<dbReference type="SMART" id="SM00859">
    <property type="entry name" value="Semialdhyde_dh"/>
    <property type="match status" value="1"/>
</dbReference>
<dbReference type="SUPFAM" id="SSF55347">
    <property type="entry name" value="Glyceraldehyde-3-phosphate dehydrogenase-like, C-terminal domain"/>
    <property type="match status" value="1"/>
</dbReference>
<dbReference type="SUPFAM" id="SSF51735">
    <property type="entry name" value="NAD(P)-binding Rossmann-fold domains"/>
    <property type="match status" value="1"/>
</dbReference>
<dbReference type="PROSITE" id="PS01224">
    <property type="entry name" value="ARGC"/>
    <property type="match status" value="1"/>
</dbReference>
<feature type="chain" id="PRO_1000123244" description="N-acetyl-gamma-glutamyl-phosphate reductase">
    <location>
        <begin position="1"/>
        <end position="343"/>
    </location>
</feature>
<feature type="active site" evidence="1">
    <location>
        <position position="147"/>
    </location>
</feature>
<comment type="function">
    <text evidence="1">Catalyzes the NADPH-dependent reduction of N-acetyl-5-glutamyl phosphate to yield N-acetyl-L-glutamate 5-semialdehyde.</text>
</comment>
<comment type="catalytic activity">
    <reaction evidence="1">
        <text>N-acetyl-L-glutamate 5-semialdehyde + phosphate + NADP(+) = N-acetyl-L-glutamyl 5-phosphate + NADPH + H(+)</text>
        <dbReference type="Rhea" id="RHEA:21588"/>
        <dbReference type="ChEBI" id="CHEBI:15378"/>
        <dbReference type="ChEBI" id="CHEBI:29123"/>
        <dbReference type="ChEBI" id="CHEBI:43474"/>
        <dbReference type="ChEBI" id="CHEBI:57783"/>
        <dbReference type="ChEBI" id="CHEBI:57936"/>
        <dbReference type="ChEBI" id="CHEBI:58349"/>
        <dbReference type="EC" id="1.2.1.38"/>
    </reaction>
</comment>
<comment type="pathway">
    <text evidence="1">Amino-acid biosynthesis; L-arginine biosynthesis; N(2)-acetyl-L-ornithine from L-glutamate: step 3/4.</text>
</comment>
<comment type="subcellular location">
    <subcellularLocation>
        <location evidence="1">Cytoplasm</location>
    </subcellularLocation>
</comment>
<comment type="similarity">
    <text evidence="1">Belongs to the NAGSA dehydrogenase family. Type 1 subfamily.</text>
</comment>
<evidence type="ECO:0000255" key="1">
    <source>
        <dbReference type="HAMAP-Rule" id="MF_00150"/>
    </source>
</evidence>
<reference key="1">
    <citation type="journal article" date="2011" name="J. Bacteriol.">
        <title>Genome sequence of lineage III Listeria monocytogenes strain HCC23.</title>
        <authorList>
            <person name="Steele C.L."/>
            <person name="Donaldson J.R."/>
            <person name="Paul D."/>
            <person name="Banes M.M."/>
            <person name="Arick T."/>
            <person name="Bridges S.M."/>
            <person name="Lawrence M.L."/>
        </authorList>
    </citation>
    <scope>NUCLEOTIDE SEQUENCE [LARGE SCALE GENOMIC DNA]</scope>
    <source>
        <strain>HCC23</strain>
    </source>
</reference>
<protein>
    <recommendedName>
        <fullName evidence="1">N-acetyl-gamma-glutamyl-phosphate reductase</fullName>
        <shortName evidence="1">AGPR</shortName>
        <ecNumber evidence="1">1.2.1.38</ecNumber>
    </recommendedName>
    <alternativeName>
        <fullName evidence="1">N-acetyl-glutamate semialdehyde dehydrogenase</fullName>
        <shortName evidence="1">NAGSA dehydrogenase</shortName>
    </alternativeName>
</protein>
<keyword id="KW-0028">Amino-acid biosynthesis</keyword>
<keyword id="KW-0055">Arginine biosynthesis</keyword>
<keyword id="KW-0963">Cytoplasm</keyword>
<keyword id="KW-0521">NADP</keyword>
<keyword id="KW-0560">Oxidoreductase</keyword>
<organism>
    <name type="scientific">Listeria monocytogenes serotype 4a (strain HCC23)</name>
    <dbReference type="NCBI Taxonomy" id="552536"/>
    <lineage>
        <taxon>Bacteria</taxon>
        <taxon>Bacillati</taxon>
        <taxon>Bacillota</taxon>
        <taxon>Bacilli</taxon>
        <taxon>Bacillales</taxon>
        <taxon>Listeriaceae</taxon>
        <taxon>Listeria</taxon>
    </lineage>
</organism>
<accession>B8DHF0</accession>
<proteinExistence type="inferred from homology"/>